<reference key="1">
    <citation type="journal article" date="2011" name="J. Bacteriol.">
        <title>Complete genome sequence of the Thermophilic Bacterium Exiguobacterium sp. AT1b.</title>
        <authorList>
            <person name="Vishnivetskaya T.A."/>
            <person name="Lucas S."/>
            <person name="Copeland A."/>
            <person name="Lapidus A."/>
            <person name="Glavina del Rio T."/>
            <person name="Dalin E."/>
            <person name="Tice H."/>
            <person name="Bruce D.C."/>
            <person name="Goodwin L.A."/>
            <person name="Pitluck S."/>
            <person name="Saunders E."/>
            <person name="Brettin T."/>
            <person name="Detter C."/>
            <person name="Han C."/>
            <person name="Larimer F."/>
            <person name="Land M.L."/>
            <person name="Hauser L.J."/>
            <person name="Kyrpides N.C."/>
            <person name="Ovchinnikova G."/>
            <person name="Kathariou S."/>
            <person name="Ramaley R.F."/>
            <person name="Rodrigues D.F."/>
            <person name="Hendrix C."/>
            <person name="Richardson P."/>
            <person name="Tiedje J.M."/>
        </authorList>
    </citation>
    <scope>NUCLEOTIDE SEQUENCE [LARGE SCALE GENOMIC DNA]</scope>
    <source>
        <strain>ATCC BAA-1283 / AT1b</strain>
    </source>
</reference>
<accession>C4L4J6</accession>
<evidence type="ECO:0000255" key="1">
    <source>
        <dbReference type="HAMAP-Rule" id="MF_00260"/>
    </source>
</evidence>
<name>HEM3_EXISA</name>
<organism>
    <name type="scientific">Exiguobacterium sp. (strain ATCC BAA-1283 / AT1b)</name>
    <dbReference type="NCBI Taxonomy" id="360911"/>
    <lineage>
        <taxon>Bacteria</taxon>
        <taxon>Bacillati</taxon>
        <taxon>Bacillota</taxon>
        <taxon>Bacilli</taxon>
        <taxon>Bacillales</taxon>
        <taxon>Bacillales Family XII. Incertae Sedis</taxon>
        <taxon>Exiguobacterium</taxon>
    </lineage>
</organism>
<comment type="function">
    <text evidence="1">Tetrapolymerization of the monopyrrole PBG into the hydroxymethylbilane pre-uroporphyrinogen in several discrete steps.</text>
</comment>
<comment type="catalytic activity">
    <reaction evidence="1">
        <text>4 porphobilinogen + H2O = hydroxymethylbilane + 4 NH4(+)</text>
        <dbReference type="Rhea" id="RHEA:13185"/>
        <dbReference type="ChEBI" id="CHEBI:15377"/>
        <dbReference type="ChEBI" id="CHEBI:28938"/>
        <dbReference type="ChEBI" id="CHEBI:57845"/>
        <dbReference type="ChEBI" id="CHEBI:58126"/>
        <dbReference type="EC" id="2.5.1.61"/>
    </reaction>
</comment>
<comment type="cofactor">
    <cofactor evidence="1">
        <name>dipyrromethane</name>
        <dbReference type="ChEBI" id="CHEBI:60342"/>
    </cofactor>
    <text evidence="1">Binds 1 dipyrromethane group covalently.</text>
</comment>
<comment type="pathway">
    <text evidence="1">Porphyrin-containing compound metabolism; protoporphyrin-IX biosynthesis; coproporphyrinogen-III from 5-aminolevulinate: step 2/4.</text>
</comment>
<comment type="subunit">
    <text evidence="1">Monomer.</text>
</comment>
<comment type="miscellaneous">
    <text evidence="1">The porphobilinogen subunits are added to the dipyrromethane group.</text>
</comment>
<comment type="similarity">
    <text evidence="1">Belongs to the HMBS family.</text>
</comment>
<dbReference type="EC" id="2.5.1.61" evidence="1"/>
<dbReference type="EMBL" id="CP001615">
    <property type="protein sequence ID" value="ACQ71559.1"/>
    <property type="molecule type" value="Genomic_DNA"/>
</dbReference>
<dbReference type="RefSeq" id="WP_015881118.1">
    <property type="nucleotide sequence ID" value="NC_012673.1"/>
</dbReference>
<dbReference type="SMR" id="C4L4J6"/>
<dbReference type="STRING" id="360911.EAT1b_2643"/>
<dbReference type="KEGG" id="eat:EAT1b_2643"/>
<dbReference type="eggNOG" id="COG0181">
    <property type="taxonomic scope" value="Bacteria"/>
</dbReference>
<dbReference type="HOGENOM" id="CLU_019704_0_2_9"/>
<dbReference type="OrthoDB" id="9810298at2"/>
<dbReference type="UniPathway" id="UPA00251">
    <property type="reaction ID" value="UER00319"/>
</dbReference>
<dbReference type="Proteomes" id="UP000000716">
    <property type="component" value="Chromosome"/>
</dbReference>
<dbReference type="GO" id="GO:0005737">
    <property type="term" value="C:cytoplasm"/>
    <property type="evidence" value="ECO:0007669"/>
    <property type="project" value="TreeGrafter"/>
</dbReference>
<dbReference type="GO" id="GO:0004418">
    <property type="term" value="F:hydroxymethylbilane synthase activity"/>
    <property type="evidence" value="ECO:0007669"/>
    <property type="project" value="UniProtKB-UniRule"/>
</dbReference>
<dbReference type="GO" id="GO:0006782">
    <property type="term" value="P:protoporphyrinogen IX biosynthetic process"/>
    <property type="evidence" value="ECO:0007669"/>
    <property type="project" value="UniProtKB-UniRule"/>
</dbReference>
<dbReference type="CDD" id="cd13646">
    <property type="entry name" value="PBP2_EcHMBS_like"/>
    <property type="match status" value="1"/>
</dbReference>
<dbReference type="FunFam" id="3.40.190.10:FF:000004">
    <property type="entry name" value="Porphobilinogen deaminase"/>
    <property type="match status" value="1"/>
</dbReference>
<dbReference type="FunFam" id="3.40.190.10:FF:000005">
    <property type="entry name" value="Porphobilinogen deaminase"/>
    <property type="match status" value="1"/>
</dbReference>
<dbReference type="Gene3D" id="3.40.190.10">
    <property type="entry name" value="Periplasmic binding protein-like II"/>
    <property type="match status" value="2"/>
</dbReference>
<dbReference type="Gene3D" id="3.30.160.40">
    <property type="entry name" value="Porphobilinogen deaminase, C-terminal domain"/>
    <property type="match status" value="1"/>
</dbReference>
<dbReference type="HAMAP" id="MF_00260">
    <property type="entry name" value="Porphobil_deam"/>
    <property type="match status" value="1"/>
</dbReference>
<dbReference type="InterPro" id="IPR000860">
    <property type="entry name" value="HemC"/>
</dbReference>
<dbReference type="InterPro" id="IPR022419">
    <property type="entry name" value="Porphobilin_deaminase_cofac_BS"/>
</dbReference>
<dbReference type="InterPro" id="IPR022417">
    <property type="entry name" value="Porphobilin_deaminase_N"/>
</dbReference>
<dbReference type="InterPro" id="IPR022418">
    <property type="entry name" value="Porphobilinogen_deaminase_C"/>
</dbReference>
<dbReference type="InterPro" id="IPR036803">
    <property type="entry name" value="Porphobilinogen_deaminase_C_sf"/>
</dbReference>
<dbReference type="NCBIfam" id="TIGR00212">
    <property type="entry name" value="hemC"/>
    <property type="match status" value="1"/>
</dbReference>
<dbReference type="PANTHER" id="PTHR11557">
    <property type="entry name" value="PORPHOBILINOGEN DEAMINASE"/>
    <property type="match status" value="1"/>
</dbReference>
<dbReference type="PANTHER" id="PTHR11557:SF0">
    <property type="entry name" value="PORPHOBILINOGEN DEAMINASE"/>
    <property type="match status" value="1"/>
</dbReference>
<dbReference type="Pfam" id="PF01379">
    <property type="entry name" value="Porphobil_deam"/>
    <property type="match status" value="1"/>
</dbReference>
<dbReference type="Pfam" id="PF03900">
    <property type="entry name" value="Porphobil_deamC"/>
    <property type="match status" value="1"/>
</dbReference>
<dbReference type="PIRSF" id="PIRSF001438">
    <property type="entry name" value="4pyrrol_synth_OHMeBilane_synth"/>
    <property type="match status" value="1"/>
</dbReference>
<dbReference type="PRINTS" id="PR00151">
    <property type="entry name" value="PORPHBDMNASE"/>
</dbReference>
<dbReference type="SUPFAM" id="SSF53850">
    <property type="entry name" value="Periplasmic binding protein-like II"/>
    <property type="match status" value="1"/>
</dbReference>
<dbReference type="SUPFAM" id="SSF54782">
    <property type="entry name" value="Porphobilinogen deaminase (hydroxymethylbilane synthase), C-terminal domain"/>
    <property type="match status" value="1"/>
</dbReference>
<dbReference type="PROSITE" id="PS00533">
    <property type="entry name" value="PORPHOBILINOGEN_DEAM"/>
    <property type="match status" value="1"/>
</dbReference>
<sequence>MRKIIVGSRRSQLAMTQTKWVIEQLKQAGATNEFEIKEIVTKGDQIVDVQLSKVGGKGLFVKEIQQQMLDGDIDFAVHSMKDVPAELPEELYISCMPKRVDARDVLICENGYTFETLPKGSIVGTSSLRRGAQILAARPDLEIQWIRGNIDTRLKKLDSENYNAILLAKAGLERMGWTDRVDFEALDPDVMVPAVGQGVLAIESRKDDAEVTTVLQLLHDDVTAKAATAERTFLKAIEGSCHVPVGGYATVNGDDVTLTGLIASVDGKEVLRVTKTSTDGVALGQAVAEELLGRGGREILASVNE</sequence>
<protein>
    <recommendedName>
        <fullName evidence="1">Porphobilinogen deaminase</fullName>
        <shortName evidence="1">PBG</shortName>
        <ecNumber evidence="1">2.5.1.61</ecNumber>
    </recommendedName>
    <alternativeName>
        <fullName evidence="1">Hydroxymethylbilane synthase</fullName>
        <shortName evidence="1">HMBS</shortName>
    </alternativeName>
    <alternativeName>
        <fullName evidence="1">Pre-uroporphyrinogen synthase</fullName>
    </alternativeName>
</protein>
<feature type="chain" id="PRO_1000204652" description="Porphobilinogen deaminase">
    <location>
        <begin position="1"/>
        <end position="305"/>
    </location>
</feature>
<feature type="modified residue" description="S-(dipyrrolylmethanemethyl)cysteine" evidence="1">
    <location>
        <position position="241"/>
    </location>
</feature>
<gene>
    <name evidence="1" type="primary">hemC</name>
    <name type="ordered locus">EAT1b_2643</name>
</gene>
<proteinExistence type="inferred from homology"/>
<keyword id="KW-0627">Porphyrin biosynthesis</keyword>
<keyword id="KW-0808">Transferase</keyword>